<proteinExistence type="inferred from homology"/>
<dbReference type="EMBL" id="CP000863">
    <property type="protein sequence ID" value="ACC58673.1"/>
    <property type="molecule type" value="Genomic_DNA"/>
</dbReference>
<dbReference type="RefSeq" id="WP_000260334.1">
    <property type="nucleotide sequence ID" value="NZ_CP031380.1"/>
</dbReference>
<dbReference type="SMR" id="B2HZV5"/>
<dbReference type="GeneID" id="9380727"/>
<dbReference type="KEGG" id="abc:ACICU_03363"/>
<dbReference type="HOGENOM" id="CLU_100590_5_1_6"/>
<dbReference type="Proteomes" id="UP000008839">
    <property type="component" value="Chromosome"/>
</dbReference>
<dbReference type="GO" id="GO:0005737">
    <property type="term" value="C:cytoplasm"/>
    <property type="evidence" value="ECO:0007669"/>
    <property type="project" value="UniProtKB-ARBA"/>
</dbReference>
<dbReference type="GO" id="GO:0015935">
    <property type="term" value="C:small ribosomal subunit"/>
    <property type="evidence" value="ECO:0007669"/>
    <property type="project" value="TreeGrafter"/>
</dbReference>
<dbReference type="GO" id="GO:0003735">
    <property type="term" value="F:structural constituent of ribosome"/>
    <property type="evidence" value="ECO:0007669"/>
    <property type="project" value="InterPro"/>
</dbReference>
<dbReference type="GO" id="GO:0006412">
    <property type="term" value="P:translation"/>
    <property type="evidence" value="ECO:0007669"/>
    <property type="project" value="UniProtKB-UniRule"/>
</dbReference>
<dbReference type="FunFam" id="3.30.1320.10:FF:000001">
    <property type="entry name" value="30S ribosomal protein S16"/>
    <property type="match status" value="1"/>
</dbReference>
<dbReference type="Gene3D" id="3.30.1320.10">
    <property type="match status" value="1"/>
</dbReference>
<dbReference type="HAMAP" id="MF_00385">
    <property type="entry name" value="Ribosomal_bS16"/>
    <property type="match status" value="1"/>
</dbReference>
<dbReference type="InterPro" id="IPR000307">
    <property type="entry name" value="Ribosomal_bS16"/>
</dbReference>
<dbReference type="InterPro" id="IPR020592">
    <property type="entry name" value="Ribosomal_bS16_CS"/>
</dbReference>
<dbReference type="InterPro" id="IPR023803">
    <property type="entry name" value="Ribosomal_bS16_dom_sf"/>
</dbReference>
<dbReference type="NCBIfam" id="TIGR00002">
    <property type="entry name" value="S16"/>
    <property type="match status" value="1"/>
</dbReference>
<dbReference type="PANTHER" id="PTHR12919">
    <property type="entry name" value="30S RIBOSOMAL PROTEIN S16"/>
    <property type="match status" value="1"/>
</dbReference>
<dbReference type="PANTHER" id="PTHR12919:SF20">
    <property type="entry name" value="SMALL RIBOSOMAL SUBUNIT PROTEIN BS16M"/>
    <property type="match status" value="1"/>
</dbReference>
<dbReference type="Pfam" id="PF00886">
    <property type="entry name" value="Ribosomal_S16"/>
    <property type="match status" value="1"/>
</dbReference>
<dbReference type="SUPFAM" id="SSF54565">
    <property type="entry name" value="Ribosomal protein S16"/>
    <property type="match status" value="1"/>
</dbReference>
<dbReference type="PROSITE" id="PS00732">
    <property type="entry name" value="RIBOSOMAL_S16"/>
    <property type="match status" value="1"/>
</dbReference>
<accession>B2HZV5</accession>
<sequence>MVVIRLARGGAKKRPFYQIVVTDSRNARDGRFIERIGFFNPTAQGQAEKLRLDADRFAHWVSQGAQPSERVASLAAQAKKATA</sequence>
<gene>
    <name evidence="1" type="primary">rpsP</name>
    <name type="ordered locus">ACICU_03363</name>
</gene>
<reference key="1">
    <citation type="journal article" date="2008" name="Antimicrob. Agents Chemother.">
        <title>Whole-genome pyrosequencing of an epidemic multidrug-resistant Acinetobacter baumannii strain belonging to the European clone II group.</title>
        <authorList>
            <person name="Iacono M."/>
            <person name="Villa L."/>
            <person name="Fortini D."/>
            <person name="Bordoni R."/>
            <person name="Imperi F."/>
            <person name="Bonnal R.J."/>
            <person name="Sicheritz-Ponten T."/>
            <person name="De Bellis G."/>
            <person name="Visca P."/>
            <person name="Cassone A."/>
            <person name="Carattoli A."/>
        </authorList>
    </citation>
    <scope>NUCLEOTIDE SEQUENCE [LARGE SCALE GENOMIC DNA]</scope>
    <source>
        <strain>ACICU</strain>
    </source>
</reference>
<feature type="chain" id="PRO_1000196311" description="Small ribosomal subunit protein bS16">
    <location>
        <begin position="1"/>
        <end position="83"/>
    </location>
</feature>
<name>RS16_ACIBC</name>
<keyword id="KW-0687">Ribonucleoprotein</keyword>
<keyword id="KW-0689">Ribosomal protein</keyword>
<organism>
    <name type="scientific">Acinetobacter baumannii (strain ACICU)</name>
    <dbReference type="NCBI Taxonomy" id="405416"/>
    <lineage>
        <taxon>Bacteria</taxon>
        <taxon>Pseudomonadati</taxon>
        <taxon>Pseudomonadota</taxon>
        <taxon>Gammaproteobacteria</taxon>
        <taxon>Moraxellales</taxon>
        <taxon>Moraxellaceae</taxon>
        <taxon>Acinetobacter</taxon>
        <taxon>Acinetobacter calcoaceticus/baumannii complex</taxon>
    </lineage>
</organism>
<comment type="similarity">
    <text evidence="1">Belongs to the bacterial ribosomal protein bS16 family.</text>
</comment>
<evidence type="ECO:0000255" key="1">
    <source>
        <dbReference type="HAMAP-Rule" id="MF_00385"/>
    </source>
</evidence>
<evidence type="ECO:0000305" key="2"/>
<protein>
    <recommendedName>
        <fullName evidence="1">Small ribosomal subunit protein bS16</fullName>
    </recommendedName>
    <alternativeName>
        <fullName evidence="2">30S ribosomal protein S16</fullName>
    </alternativeName>
</protein>